<feature type="chain" id="PRO_0000299929" description="Uncharacterized protein YHR139C-A">
    <location>
        <begin position="1"/>
        <end position="103"/>
    </location>
</feature>
<sequence length="103" mass="11902">MRSADFSNPRILSNLMSKSEKEKRAIIIFNCRLNKGLYVTSACVSRSVFRCCKQEPLIEFVSPKMIAFVQIDGRYLTKMLTCDIHVRKEAKEGRGYQQIHKLS</sequence>
<protein>
    <recommendedName>
        <fullName>Uncharacterized protein YHR139C-A</fullName>
    </recommendedName>
</protein>
<gene>
    <name type="ordered locus">YHR139C-A</name>
</gene>
<name>YH139_YEAST</name>
<organism>
    <name type="scientific">Saccharomyces cerevisiae (strain ATCC 204508 / S288c)</name>
    <name type="common">Baker's yeast</name>
    <dbReference type="NCBI Taxonomy" id="559292"/>
    <lineage>
        <taxon>Eukaryota</taxon>
        <taxon>Fungi</taxon>
        <taxon>Dikarya</taxon>
        <taxon>Ascomycota</taxon>
        <taxon>Saccharomycotina</taxon>
        <taxon>Saccharomycetes</taxon>
        <taxon>Saccharomycetales</taxon>
        <taxon>Saccharomycetaceae</taxon>
        <taxon>Saccharomyces</taxon>
    </lineage>
</organism>
<dbReference type="EMBL" id="U10398">
    <property type="protein sequence ID" value="AAB68422.1"/>
    <property type="molecule type" value="Genomic_DNA"/>
</dbReference>
<dbReference type="EMBL" id="BK006934">
    <property type="protein sequence ID" value="DAA80262.1"/>
    <property type="molecule type" value="Genomic_DNA"/>
</dbReference>
<dbReference type="PIR" id="S52607">
    <property type="entry name" value="S52607"/>
</dbReference>
<dbReference type="RefSeq" id="NP_001335742.1">
    <property type="nucleotide sequence ID" value="NM_001348830.1"/>
</dbReference>
<dbReference type="FunCoup" id="O13536">
    <property type="interactions" value="8"/>
</dbReference>
<dbReference type="STRING" id="4932.YHR139C-A"/>
<dbReference type="PaxDb" id="4932-YHR139C-A"/>
<dbReference type="EnsemblFungi" id="YHR139C-A_mRNA">
    <property type="protein sequence ID" value="YHR139C-A"/>
    <property type="gene ID" value="YHR139C-A"/>
</dbReference>
<dbReference type="GeneID" id="856542"/>
<dbReference type="AGR" id="SGD:S000003533"/>
<dbReference type="SGD" id="S000003533">
    <property type="gene designation" value="YHR139C-A"/>
</dbReference>
<dbReference type="HOGENOM" id="CLU_2265806_0_0_1"/>
<dbReference type="InParanoid" id="O13536"/>
<dbReference type="OrthoDB" id="10594274at2759"/>
<dbReference type="PRO" id="PR:O13536"/>
<dbReference type="Proteomes" id="UP000002311">
    <property type="component" value="Chromosome VIII"/>
</dbReference>
<dbReference type="RNAct" id="O13536">
    <property type="molecule type" value="protein"/>
</dbReference>
<keyword id="KW-1185">Reference proteome</keyword>
<reference key="1">
    <citation type="journal article" date="1994" name="Science">
        <title>Complete nucleotide sequence of Saccharomyces cerevisiae chromosome VIII.</title>
        <authorList>
            <person name="Johnston M."/>
            <person name="Andrews S."/>
            <person name="Brinkman R."/>
            <person name="Cooper J."/>
            <person name="Ding H."/>
            <person name="Dover J."/>
            <person name="Du Z."/>
            <person name="Favello A."/>
            <person name="Fulton L."/>
            <person name="Gattung S."/>
            <person name="Geisel C."/>
            <person name="Kirsten J."/>
            <person name="Kucaba T."/>
            <person name="Hillier L.W."/>
            <person name="Jier M."/>
            <person name="Johnston L."/>
            <person name="Langston Y."/>
            <person name="Latreille P."/>
            <person name="Louis E.J."/>
            <person name="Macri C."/>
            <person name="Mardis E."/>
            <person name="Menezes S."/>
            <person name="Mouser L."/>
            <person name="Nhan M."/>
            <person name="Rifkin L."/>
            <person name="Riles L."/>
            <person name="St Peter H."/>
            <person name="Trevaskis E."/>
            <person name="Vaughan K."/>
            <person name="Vignati D."/>
            <person name="Wilcox L."/>
            <person name="Wohldman P."/>
            <person name="Waterston R."/>
            <person name="Wilson R."/>
            <person name="Vaudin M."/>
        </authorList>
    </citation>
    <scope>NUCLEOTIDE SEQUENCE [LARGE SCALE GENOMIC DNA]</scope>
    <source>
        <strain>ATCC 204508 / S288c</strain>
    </source>
</reference>
<reference key="2">
    <citation type="journal article" date="2014" name="G3 (Bethesda)">
        <title>The reference genome sequence of Saccharomyces cerevisiae: Then and now.</title>
        <authorList>
            <person name="Engel S.R."/>
            <person name="Dietrich F.S."/>
            <person name="Fisk D.G."/>
            <person name="Binkley G."/>
            <person name="Balakrishnan R."/>
            <person name="Costanzo M.C."/>
            <person name="Dwight S.S."/>
            <person name="Hitz B.C."/>
            <person name="Karra K."/>
            <person name="Nash R.S."/>
            <person name="Weng S."/>
            <person name="Wong E.D."/>
            <person name="Lloyd P."/>
            <person name="Skrzypek M.S."/>
            <person name="Miyasato S.R."/>
            <person name="Simison M."/>
            <person name="Cherry J.M."/>
        </authorList>
    </citation>
    <scope>GENOME REANNOTATION</scope>
    <source>
        <strain>ATCC 204508 / S288c</strain>
    </source>
</reference>
<accession>O13536</accession>
<accession>A0A1S0T045</accession>
<proteinExistence type="predicted"/>